<comment type="function">
    <text evidence="1">Binds directly to 16S ribosomal RNA.</text>
</comment>
<comment type="similarity">
    <text evidence="1">Belongs to the bacterial ribosomal protein bS20 family.</text>
</comment>
<name>RS20_STRPI</name>
<accession>B1IB07</accession>
<evidence type="ECO:0000255" key="1">
    <source>
        <dbReference type="HAMAP-Rule" id="MF_00500"/>
    </source>
</evidence>
<evidence type="ECO:0000305" key="2"/>
<gene>
    <name evidence="1" type="primary">rpsT</name>
    <name type="ordered locus">SPH_0936</name>
</gene>
<feature type="chain" id="PRO_1000126524" description="Small ribosomal subunit protein bS20">
    <location>
        <begin position="1"/>
        <end position="78"/>
    </location>
</feature>
<keyword id="KW-0687">Ribonucleoprotein</keyword>
<keyword id="KW-0689">Ribosomal protein</keyword>
<keyword id="KW-0694">RNA-binding</keyword>
<keyword id="KW-0699">rRNA-binding</keyword>
<organism>
    <name type="scientific">Streptococcus pneumoniae (strain Hungary19A-6)</name>
    <dbReference type="NCBI Taxonomy" id="487214"/>
    <lineage>
        <taxon>Bacteria</taxon>
        <taxon>Bacillati</taxon>
        <taxon>Bacillota</taxon>
        <taxon>Bacilli</taxon>
        <taxon>Lactobacillales</taxon>
        <taxon>Streptococcaceae</taxon>
        <taxon>Streptococcus</taxon>
    </lineage>
</organism>
<sequence length="78" mass="8526">MANIKSAIKRAELNVKQNEKNSAQKSAMRTAIKAFEANPSEELFRAASSAIDKAETKGLIHKNKASRDKARLSAKLAK</sequence>
<proteinExistence type="inferred from homology"/>
<protein>
    <recommendedName>
        <fullName evidence="1">Small ribosomal subunit protein bS20</fullName>
    </recommendedName>
    <alternativeName>
        <fullName evidence="2">30S ribosomal protein S20</fullName>
    </alternativeName>
</protein>
<dbReference type="EMBL" id="CP000936">
    <property type="protein sequence ID" value="ACA36315.1"/>
    <property type="molecule type" value="Genomic_DNA"/>
</dbReference>
<dbReference type="RefSeq" id="WP_001274000.1">
    <property type="nucleotide sequence ID" value="NC_010380.1"/>
</dbReference>
<dbReference type="SMR" id="B1IB07"/>
<dbReference type="GeneID" id="93739844"/>
<dbReference type="KEGG" id="spv:SPH_0936"/>
<dbReference type="HOGENOM" id="CLU_160655_1_1_9"/>
<dbReference type="Proteomes" id="UP000002163">
    <property type="component" value="Chromosome"/>
</dbReference>
<dbReference type="GO" id="GO:0005829">
    <property type="term" value="C:cytosol"/>
    <property type="evidence" value="ECO:0007669"/>
    <property type="project" value="TreeGrafter"/>
</dbReference>
<dbReference type="GO" id="GO:0015935">
    <property type="term" value="C:small ribosomal subunit"/>
    <property type="evidence" value="ECO:0007669"/>
    <property type="project" value="TreeGrafter"/>
</dbReference>
<dbReference type="GO" id="GO:0070181">
    <property type="term" value="F:small ribosomal subunit rRNA binding"/>
    <property type="evidence" value="ECO:0007669"/>
    <property type="project" value="TreeGrafter"/>
</dbReference>
<dbReference type="GO" id="GO:0003735">
    <property type="term" value="F:structural constituent of ribosome"/>
    <property type="evidence" value="ECO:0007669"/>
    <property type="project" value="InterPro"/>
</dbReference>
<dbReference type="GO" id="GO:0006412">
    <property type="term" value="P:translation"/>
    <property type="evidence" value="ECO:0007669"/>
    <property type="project" value="UniProtKB-UniRule"/>
</dbReference>
<dbReference type="FunFam" id="1.20.58.110:FF:000001">
    <property type="entry name" value="30S ribosomal protein S20"/>
    <property type="match status" value="1"/>
</dbReference>
<dbReference type="Gene3D" id="1.20.58.110">
    <property type="entry name" value="Ribosomal protein S20"/>
    <property type="match status" value="1"/>
</dbReference>
<dbReference type="HAMAP" id="MF_00500">
    <property type="entry name" value="Ribosomal_bS20"/>
    <property type="match status" value="1"/>
</dbReference>
<dbReference type="InterPro" id="IPR002583">
    <property type="entry name" value="Ribosomal_bS20"/>
</dbReference>
<dbReference type="InterPro" id="IPR036510">
    <property type="entry name" value="Ribosomal_bS20_sf"/>
</dbReference>
<dbReference type="NCBIfam" id="TIGR00029">
    <property type="entry name" value="S20"/>
    <property type="match status" value="1"/>
</dbReference>
<dbReference type="PANTHER" id="PTHR33398">
    <property type="entry name" value="30S RIBOSOMAL PROTEIN S20"/>
    <property type="match status" value="1"/>
</dbReference>
<dbReference type="PANTHER" id="PTHR33398:SF1">
    <property type="entry name" value="SMALL RIBOSOMAL SUBUNIT PROTEIN BS20C"/>
    <property type="match status" value="1"/>
</dbReference>
<dbReference type="Pfam" id="PF01649">
    <property type="entry name" value="Ribosomal_S20p"/>
    <property type="match status" value="1"/>
</dbReference>
<dbReference type="SUPFAM" id="SSF46992">
    <property type="entry name" value="Ribosomal protein S20"/>
    <property type="match status" value="1"/>
</dbReference>
<reference key="1">
    <citation type="journal article" date="2010" name="Genome Biol.">
        <title>Structure and dynamics of the pan-genome of Streptococcus pneumoniae and closely related species.</title>
        <authorList>
            <person name="Donati C."/>
            <person name="Hiller N.L."/>
            <person name="Tettelin H."/>
            <person name="Muzzi A."/>
            <person name="Croucher N.J."/>
            <person name="Angiuoli S.V."/>
            <person name="Oggioni M."/>
            <person name="Dunning Hotopp J.C."/>
            <person name="Hu F.Z."/>
            <person name="Riley D.R."/>
            <person name="Covacci A."/>
            <person name="Mitchell T.J."/>
            <person name="Bentley S.D."/>
            <person name="Kilian M."/>
            <person name="Ehrlich G.D."/>
            <person name="Rappuoli R."/>
            <person name="Moxon E.R."/>
            <person name="Masignani V."/>
        </authorList>
    </citation>
    <scope>NUCLEOTIDE SEQUENCE [LARGE SCALE GENOMIC DNA]</scope>
    <source>
        <strain>Hungary19A-6</strain>
    </source>
</reference>